<gene>
    <name type="primary">ribF</name>
    <name type="ordered locus">c0029</name>
</gene>
<reference key="1">
    <citation type="journal article" date="2002" name="Proc. Natl. Acad. Sci. U.S.A.">
        <title>Extensive mosaic structure revealed by the complete genome sequence of uropathogenic Escherichia coli.</title>
        <authorList>
            <person name="Welch R.A."/>
            <person name="Burland V."/>
            <person name="Plunkett G. III"/>
            <person name="Redford P."/>
            <person name="Roesch P."/>
            <person name="Rasko D."/>
            <person name="Buckles E.L."/>
            <person name="Liou S.-R."/>
            <person name="Boutin A."/>
            <person name="Hackett J."/>
            <person name="Stroud D."/>
            <person name="Mayhew G.F."/>
            <person name="Rose D.J."/>
            <person name="Zhou S."/>
            <person name="Schwartz D.C."/>
            <person name="Perna N.T."/>
            <person name="Mobley H.L.T."/>
            <person name="Donnenberg M.S."/>
            <person name="Blattner F.R."/>
        </authorList>
    </citation>
    <scope>NUCLEOTIDE SEQUENCE [LARGE SCALE GENOMIC DNA]</scope>
    <source>
        <strain>CFT073 / ATCC 700928 / UPEC</strain>
    </source>
</reference>
<protein>
    <recommendedName>
        <fullName evidence="1">Bifunctional riboflavin kinase/FMN adenylyltransferase</fullName>
    </recommendedName>
    <alternativeName>
        <fullName evidence="1">Riboflavin biosynthesis protein RibF</fullName>
    </alternativeName>
    <domain>
        <recommendedName>
            <fullName evidence="1">Riboflavin kinase</fullName>
            <ecNumber evidence="1">2.7.1.26</ecNumber>
        </recommendedName>
        <alternativeName>
            <fullName evidence="1">Flavokinase</fullName>
        </alternativeName>
    </domain>
    <domain>
        <recommendedName>
            <fullName evidence="1">FMN adenylyltransferase</fullName>
            <ecNumber evidence="1">2.7.7.2</ecNumber>
        </recommendedName>
        <alternativeName>
            <fullName evidence="1">FAD pyrophosphorylase</fullName>
        </alternativeName>
        <alternativeName>
            <fullName evidence="1">FAD synthase</fullName>
        </alternativeName>
    </domain>
</protein>
<evidence type="ECO:0000250" key="1">
    <source>
        <dbReference type="UniProtKB" id="Q59263"/>
    </source>
</evidence>
<evidence type="ECO:0000305" key="2"/>
<comment type="function">
    <text evidence="1">Catalyzes the phosphorylation of riboflavin to FMN followed by the adenylation of FMN to FAD.</text>
</comment>
<comment type="catalytic activity">
    <reaction evidence="1">
        <text>riboflavin + ATP = FMN + ADP + H(+)</text>
        <dbReference type="Rhea" id="RHEA:14357"/>
        <dbReference type="ChEBI" id="CHEBI:15378"/>
        <dbReference type="ChEBI" id="CHEBI:30616"/>
        <dbReference type="ChEBI" id="CHEBI:57986"/>
        <dbReference type="ChEBI" id="CHEBI:58210"/>
        <dbReference type="ChEBI" id="CHEBI:456216"/>
        <dbReference type="EC" id="2.7.1.26"/>
    </reaction>
</comment>
<comment type="catalytic activity">
    <reaction evidence="1">
        <text>FMN + ATP + H(+) = FAD + diphosphate</text>
        <dbReference type="Rhea" id="RHEA:17237"/>
        <dbReference type="ChEBI" id="CHEBI:15378"/>
        <dbReference type="ChEBI" id="CHEBI:30616"/>
        <dbReference type="ChEBI" id="CHEBI:33019"/>
        <dbReference type="ChEBI" id="CHEBI:57692"/>
        <dbReference type="ChEBI" id="CHEBI:58210"/>
        <dbReference type="EC" id="2.7.7.2"/>
    </reaction>
</comment>
<comment type="pathway">
    <text evidence="1">Cofactor biosynthesis; FAD biosynthesis; FAD from FMN: step 1/1.</text>
</comment>
<comment type="pathway">
    <text evidence="1">Cofactor biosynthesis; FMN biosynthesis; FMN from riboflavin (ATP route): step 1/1.</text>
</comment>
<comment type="similarity">
    <text evidence="2">Belongs to the RibF family.</text>
</comment>
<dbReference type="EC" id="2.7.1.26" evidence="1"/>
<dbReference type="EC" id="2.7.7.2" evidence="1"/>
<dbReference type="EMBL" id="AE014075">
    <property type="protein sequence ID" value="AAN78529.1"/>
    <property type="molecule type" value="Genomic_DNA"/>
</dbReference>
<dbReference type="RefSeq" id="WP_000767329.1">
    <property type="nucleotide sequence ID" value="NZ_CP051263.1"/>
</dbReference>
<dbReference type="SMR" id="P0AG41"/>
<dbReference type="STRING" id="199310.c0029"/>
<dbReference type="GeneID" id="93777411"/>
<dbReference type="KEGG" id="ecc:c0029"/>
<dbReference type="eggNOG" id="COG0196">
    <property type="taxonomic scope" value="Bacteria"/>
</dbReference>
<dbReference type="HOGENOM" id="CLU_048437_0_1_6"/>
<dbReference type="BioCyc" id="ECOL199310:C0029-MONOMER"/>
<dbReference type="UniPathway" id="UPA00276">
    <property type="reaction ID" value="UER00406"/>
</dbReference>
<dbReference type="UniPathway" id="UPA00277">
    <property type="reaction ID" value="UER00407"/>
</dbReference>
<dbReference type="Proteomes" id="UP000001410">
    <property type="component" value="Chromosome"/>
</dbReference>
<dbReference type="GO" id="GO:0005524">
    <property type="term" value="F:ATP binding"/>
    <property type="evidence" value="ECO:0007669"/>
    <property type="project" value="UniProtKB-KW"/>
</dbReference>
<dbReference type="GO" id="GO:0003919">
    <property type="term" value="F:FMN adenylyltransferase activity"/>
    <property type="evidence" value="ECO:0007669"/>
    <property type="project" value="UniProtKB-EC"/>
</dbReference>
<dbReference type="GO" id="GO:0008531">
    <property type="term" value="F:riboflavin kinase activity"/>
    <property type="evidence" value="ECO:0007669"/>
    <property type="project" value="UniProtKB-EC"/>
</dbReference>
<dbReference type="GO" id="GO:0006747">
    <property type="term" value="P:FAD biosynthetic process"/>
    <property type="evidence" value="ECO:0007669"/>
    <property type="project" value="UniProtKB-UniPathway"/>
</dbReference>
<dbReference type="GO" id="GO:0009398">
    <property type="term" value="P:FMN biosynthetic process"/>
    <property type="evidence" value="ECO:0007669"/>
    <property type="project" value="UniProtKB-UniPathway"/>
</dbReference>
<dbReference type="GO" id="GO:0009231">
    <property type="term" value="P:riboflavin biosynthetic process"/>
    <property type="evidence" value="ECO:0007669"/>
    <property type="project" value="InterPro"/>
</dbReference>
<dbReference type="CDD" id="cd02064">
    <property type="entry name" value="FAD_synthetase_N"/>
    <property type="match status" value="1"/>
</dbReference>
<dbReference type="FunFam" id="2.40.30.30:FF:000001">
    <property type="entry name" value="Riboflavin biosynthesis protein"/>
    <property type="match status" value="1"/>
</dbReference>
<dbReference type="FunFam" id="3.40.50.620:FF:000021">
    <property type="entry name" value="Riboflavin biosynthesis protein"/>
    <property type="match status" value="1"/>
</dbReference>
<dbReference type="Gene3D" id="3.40.50.620">
    <property type="entry name" value="HUPs"/>
    <property type="match status" value="1"/>
</dbReference>
<dbReference type="Gene3D" id="2.40.30.30">
    <property type="entry name" value="Riboflavin kinase-like"/>
    <property type="match status" value="1"/>
</dbReference>
<dbReference type="InterPro" id="IPR015864">
    <property type="entry name" value="FAD_synthase"/>
</dbReference>
<dbReference type="InterPro" id="IPR023468">
    <property type="entry name" value="Riboflavin_kinase"/>
</dbReference>
<dbReference type="InterPro" id="IPR002606">
    <property type="entry name" value="Riboflavin_kinase_bac"/>
</dbReference>
<dbReference type="InterPro" id="IPR015865">
    <property type="entry name" value="Riboflavin_kinase_bac/euk"/>
</dbReference>
<dbReference type="InterPro" id="IPR023465">
    <property type="entry name" value="Riboflavin_kinase_dom_sf"/>
</dbReference>
<dbReference type="InterPro" id="IPR014729">
    <property type="entry name" value="Rossmann-like_a/b/a_fold"/>
</dbReference>
<dbReference type="NCBIfam" id="NF004159">
    <property type="entry name" value="PRK05627.1-2"/>
    <property type="match status" value="1"/>
</dbReference>
<dbReference type="NCBIfam" id="NF004160">
    <property type="entry name" value="PRK05627.1-3"/>
    <property type="match status" value="1"/>
</dbReference>
<dbReference type="NCBIfam" id="NF004162">
    <property type="entry name" value="PRK05627.1-5"/>
    <property type="match status" value="1"/>
</dbReference>
<dbReference type="NCBIfam" id="NF004163">
    <property type="entry name" value="PRK05627.1-6"/>
    <property type="match status" value="1"/>
</dbReference>
<dbReference type="NCBIfam" id="TIGR00083">
    <property type="entry name" value="ribF"/>
    <property type="match status" value="1"/>
</dbReference>
<dbReference type="PANTHER" id="PTHR22749:SF6">
    <property type="entry name" value="RIBOFLAVIN KINASE"/>
    <property type="match status" value="1"/>
</dbReference>
<dbReference type="PANTHER" id="PTHR22749">
    <property type="entry name" value="RIBOFLAVIN KINASE/FMN ADENYLYLTRANSFERASE"/>
    <property type="match status" value="1"/>
</dbReference>
<dbReference type="Pfam" id="PF06574">
    <property type="entry name" value="FAD_syn"/>
    <property type="match status" value="1"/>
</dbReference>
<dbReference type="Pfam" id="PF01687">
    <property type="entry name" value="Flavokinase"/>
    <property type="match status" value="1"/>
</dbReference>
<dbReference type="PIRSF" id="PIRSF004491">
    <property type="entry name" value="FAD_Synth"/>
    <property type="match status" value="1"/>
</dbReference>
<dbReference type="SMART" id="SM00904">
    <property type="entry name" value="Flavokinase"/>
    <property type="match status" value="1"/>
</dbReference>
<dbReference type="SUPFAM" id="SSF52374">
    <property type="entry name" value="Nucleotidylyl transferase"/>
    <property type="match status" value="1"/>
</dbReference>
<dbReference type="SUPFAM" id="SSF82114">
    <property type="entry name" value="Riboflavin kinase-like"/>
    <property type="match status" value="1"/>
</dbReference>
<accession>P0AG41</accession>
<accession>P08391</accession>
<accession>P75621</accession>
<sequence>MKLIRGIHNLSQAPQEGCVLTIGNFDGVHRGHRALLQGLQEEGRKRNLPVMVMLFEPQPLELFATDKAPARLTRLREKLRYLAECGVDYVLCVRFDRRFAALTAQNFISDLLVKHLRVKFLAVGDDFRFGAGREGDFLLLQKAGMEYGFDITSTQTFCEGGVRISSTAVRQALADDNLALAESLLGHPFAISGRVVHGDELGRTIGFPTANVPLRRQVSPVKGVYAVEVLGLGEKPLPGVANIGTRPTVAGIRQQLEVHLLDVAMDLYGRHIQVVLRKKIRNEQRFASLDELKAQIARDELTAREFFGLTKPA</sequence>
<keyword id="KW-0067">ATP-binding</keyword>
<keyword id="KW-0274">FAD</keyword>
<keyword id="KW-0285">Flavoprotein</keyword>
<keyword id="KW-0288">FMN</keyword>
<keyword id="KW-0418">Kinase</keyword>
<keyword id="KW-0511">Multifunctional enzyme</keyword>
<keyword id="KW-0547">Nucleotide-binding</keyword>
<keyword id="KW-0548">Nucleotidyltransferase</keyword>
<keyword id="KW-1185">Reference proteome</keyword>
<keyword id="KW-0808">Transferase</keyword>
<name>RIBF_ECOL6</name>
<feature type="chain" id="PRO_0000194139" description="Bifunctional riboflavin kinase/FMN adenylyltransferase">
    <location>
        <begin position="1"/>
        <end position="313"/>
    </location>
</feature>
<organism>
    <name type="scientific">Escherichia coli O6:H1 (strain CFT073 / ATCC 700928 / UPEC)</name>
    <dbReference type="NCBI Taxonomy" id="199310"/>
    <lineage>
        <taxon>Bacteria</taxon>
        <taxon>Pseudomonadati</taxon>
        <taxon>Pseudomonadota</taxon>
        <taxon>Gammaproteobacteria</taxon>
        <taxon>Enterobacterales</taxon>
        <taxon>Enterobacteriaceae</taxon>
        <taxon>Escherichia</taxon>
    </lineage>
</organism>
<proteinExistence type="inferred from homology"/>